<protein>
    <recommendedName>
        <fullName evidence="1">ATP-dependent protease subunit HslV</fullName>
        <ecNumber evidence="1">3.4.25.2</ecNumber>
    </recommendedName>
</protein>
<evidence type="ECO:0000255" key="1">
    <source>
        <dbReference type="HAMAP-Rule" id="MF_00248"/>
    </source>
</evidence>
<gene>
    <name evidence="1" type="primary">hslV</name>
    <name type="ordered locus">BBR47_34890</name>
</gene>
<accession>C0ZFA7</accession>
<sequence length="180" mass="19513">MEQFHATTIFAVQHNGSVAMAGDGQVTFGNSMVMKHGAKKVRRLYRGEVLAGFAGSVADAITLFEKFEGKLEEYHGNLQRAAVELAKEWRMDKILRRLEAMMIVANKEHLLLISGNGEIIEPDDGILAIGSGGSFALAAGRALKTYAPHLGAREIAEASLRTAAEICVFTNNNLVVDELN</sequence>
<keyword id="KW-0021">Allosteric enzyme</keyword>
<keyword id="KW-0963">Cytoplasm</keyword>
<keyword id="KW-0378">Hydrolase</keyword>
<keyword id="KW-0479">Metal-binding</keyword>
<keyword id="KW-0645">Protease</keyword>
<keyword id="KW-1185">Reference proteome</keyword>
<keyword id="KW-0915">Sodium</keyword>
<keyword id="KW-0888">Threonine protease</keyword>
<feature type="chain" id="PRO_1000204501" description="ATP-dependent protease subunit HslV">
    <location>
        <begin position="1"/>
        <end position="180"/>
    </location>
</feature>
<feature type="active site" evidence="1">
    <location>
        <position position="7"/>
    </location>
</feature>
<feature type="binding site" evidence="1">
    <location>
        <position position="164"/>
    </location>
    <ligand>
        <name>Na(+)</name>
        <dbReference type="ChEBI" id="CHEBI:29101"/>
    </ligand>
</feature>
<feature type="binding site" evidence="1">
    <location>
        <position position="167"/>
    </location>
    <ligand>
        <name>Na(+)</name>
        <dbReference type="ChEBI" id="CHEBI:29101"/>
    </ligand>
</feature>
<feature type="binding site" evidence="1">
    <location>
        <position position="170"/>
    </location>
    <ligand>
        <name>Na(+)</name>
        <dbReference type="ChEBI" id="CHEBI:29101"/>
    </ligand>
</feature>
<comment type="function">
    <text evidence="1">Protease subunit of a proteasome-like degradation complex believed to be a general protein degrading machinery.</text>
</comment>
<comment type="catalytic activity">
    <reaction evidence="1">
        <text>ATP-dependent cleavage of peptide bonds with broad specificity.</text>
        <dbReference type="EC" id="3.4.25.2"/>
    </reaction>
</comment>
<comment type="activity regulation">
    <text evidence="1">Allosterically activated by HslU binding.</text>
</comment>
<comment type="subunit">
    <text evidence="1">A double ring-shaped homohexamer of HslV is capped on each side by a ring-shaped HslU homohexamer. The assembly of the HslU/HslV complex is dependent on binding of ATP.</text>
</comment>
<comment type="subcellular location">
    <subcellularLocation>
        <location evidence="1">Cytoplasm</location>
    </subcellularLocation>
</comment>
<comment type="similarity">
    <text evidence="1">Belongs to the peptidase T1B family. HslV subfamily.</text>
</comment>
<organism>
    <name type="scientific">Brevibacillus brevis (strain 47 / JCM 6285 / NBRC 100599)</name>
    <dbReference type="NCBI Taxonomy" id="358681"/>
    <lineage>
        <taxon>Bacteria</taxon>
        <taxon>Bacillati</taxon>
        <taxon>Bacillota</taxon>
        <taxon>Bacilli</taxon>
        <taxon>Bacillales</taxon>
        <taxon>Paenibacillaceae</taxon>
        <taxon>Brevibacillus</taxon>
    </lineage>
</organism>
<proteinExistence type="inferred from homology"/>
<name>HSLV_BREBN</name>
<reference key="1">
    <citation type="submission" date="2005-03" db="EMBL/GenBank/DDBJ databases">
        <title>Brevibacillus brevis strain 47, complete genome.</title>
        <authorList>
            <person name="Hosoyama A."/>
            <person name="Yamada R."/>
            <person name="Hongo Y."/>
            <person name="Terui Y."/>
            <person name="Ankai A."/>
            <person name="Masuyama W."/>
            <person name="Sekiguchi M."/>
            <person name="Takeda T."/>
            <person name="Asano K."/>
            <person name="Ohji S."/>
            <person name="Ichikawa N."/>
            <person name="Narita S."/>
            <person name="Aoki N."/>
            <person name="Miura H."/>
            <person name="Matsushita S."/>
            <person name="Sekigawa T."/>
            <person name="Yamagata H."/>
            <person name="Yoshikawa H."/>
            <person name="Udaka S."/>
            <person name="Tanikawa S."/>
            <person name="Fujita N."/>
        </authorList>
    </citation>
    <scope>NUCLEOTIDE SEQUENCE [LARGE SCALE GENOMIC DNA]</scope>
    <source>
        <strain>47 / JCM 6285 / NBRC 100599</strain>
    </source>
</reference>
<dbReference type="EC" id="3.4.25.2" evidence="1"/>
<dbReference type="EMBL" id="AP008955">
    <property type="protein sequence ID" value="BAH44466.1"/>
    <property type="molecule type" value="Genomic_DNA"/>
</dbReference>
<dbReference type="RefSeq" id="WP_015891764.1">
    <property type="nucleotide sequence ID" value="NC_012491.1"/>
</dbReference>
<dbReference type="SMR" id="C0ZFA7"/>
<dbReference type="STRING" id="358681.BBR47_34890"/>
<dbReference type="MEROPS" id="T01.007"/>
<dbReference type="GeneID" id="87583917"/>
<dbReference type="KEGG" id="bbe:BBR47_34890"/>
<dbReference type="eggNOG" id="COG5405">
    <property type="taxonomic scope" value="Bacteria"/>
</dbReference>
<dbReference type="HOGENOM" id="CLU_093872_1_0_9"/>
<dbReference type="Proteomes" id="UP000001877">
    <property type="component" value="Chromosome"/>
</dbReference>
<dbReference type="GO" id="GO:0009376">
    <property type="term" value="C:HslUV protease complex"/>
    <property type="evidence" value="ECO:0007669"/>
    <property type="project" value="UniProtKB-UniRule"/>
</dbReference>
<dbReference type="GO" id="GO:0005839">
    <property type="term" value="C:proteasome core complex"/>
    <property type="evidence" value="ECO:0007669"/>
    <property type="project" value="InterPro"/>
</dbReference>
<dbReference type="GO" id="GO:0046872">
    <property type="term" value="F:metal ion binding"/>
    <property type="evidence" value="ECO:0007669"/>
    <property type="project" value="UniProtKB-KW"/>
</dbReference>
<dbReference type="GO" id="GO:0004298">
    <property type="term" value="F:threonine-type endopeptidase activity"/>
    <property type="evidence" value="ECO:0007669"/>
    <property type="project" value="UniProtKB-KW"/>
</dbReference>
<dbReference type="GO" id="GO:0051603">
    <property type="term" value="P:proteolysis involved in protein catabolic process"/>
    <property type="evidence" value="ECO:0007669"/>
    <property type="project" value="InterPro"/>
</dbReference>
<dbReference type="CDD" id="cd01913">
    <property type="entry name" value="protease_HslV"/>
    <property type="match status" value="1"/>
</dbReference>
<dbReference type="Gene3D" id="3.60.20.10">
    <property type="entry name" value="Glutamine Phosphoribosylpyrophosphate, subunit 1, domain 1"/>
    <property type="match status" value="1"/>
</dbReference>
<dbReference type="HAMAP" id="MF_00248">
    <property type="entry name" value="HslV"/>
    <property type="match status" value="1"/>
</dbReference>
<dbReference type="InterPro" id="IPR022281">
    <property type="entry name" value="ATP-dep_Prtase_HsIV_su"/>
</dbReference>
<dbReference type="InterPro" id="IPR029055">
    <property type="entry name" value="Ntn_hydrolases_N"/>
</dbReference>
<dbReference type="InterPro" id="IPR001353">
    <property type="entry name" value="Proteasome_sua/b"/>
</dbReference>
<dbReference type="InterPro" id="IPR023333">
    <property type="entry name" value="Proteasome_suB-type"/>
</dbReference>
<dbReference type="NCBIfam" id="TIGR03692">
    <property type="entry name" value="ATP_dep_HslV"/>
    <property type="match status" value="1"/>
</dbReference>
<dbReference type="NCBIfam" id="NF003964">
    <property type="entry name" value="PRK05456.1"/>
    <property type="match status" value="1"/>
</dbReference>
<dbReference type="PANTHER" id="PTHR32194:SF0">
    <property type="entry name" value="ATP-DEPENDENT PROTEASE SUBUNIT HSLV"/>
    <property type="match status" value="1"/>
</dbReference>
<dbReference type="PANTHER" id="PTHR32194">
    <property type="entry name" value="METALLOPROTEASE TLDD"/>
    <property type="match status" value="1"/>
</dbReference>
<dbReference type="Pfam" id="PF00227">
    <property type="entry name" value="Proteasome"/>
    <property type="match status" value="1"/>
</dbReference>
<dbReference type="PIRSF" id="PIRSF039093">
    <property type="entry name" value="HslV"/>
    <property type="match status" value="1"/>
</dbReference>
<dbReference type="SUPFAM" id="SSF56235">
    <property type="entry name" value="N-terminal nucleophile aminohydrolases (Ntn hydrolases)"/>
    <property type="match status" value="1"/>
</dbReference>
<dbReference type="PROSITE" id="PS51476">
    <property type="entry name" value="PROTEASOME_BETA_2"/>
    <property type="match status" value="1"/>
</dbReference>